<organism>
    <name type="scientific">Schizosaccharomyces pombe (strain 972 / ATCC 24843)</name>
    <name type="common">Fission yeast</name>
    <dbReference type="NCBI Taxonomy" id="284812"/>
    <lineage>
        <taxon>Eukaryota</taxon>
        <taxon>Fungi</taxon>
        <taxon>Dikarya</taxon>
        <taxon>Ascomycota</taxon>
        <taxon>Taphrinomycotina</taxon>
        <taxon>Schizosaccharomycetes</taxon>
        <taxon>Schizosaccharomycetales</taxon>
        <taxon>Schizosaccharomycetaceae</taxon>
        <taxon>Schizosaccharomyces</taxon>
    </lineage>
</organism>
<accession>O74338</accession>
<keyword id="KW-0131">Cell cycle</keyword>
<keyword id="KW-0132">Cell division</keyword>
<keyword id="KW-0175">Coiled coil</keyword>
<keyword id="KW-0963">Cytoplasm</keyword>
<keyword id="KW-0206">Cytoskeleton</keyword>
<keyword id="KW-0498">Mitosis</keyword>
<keyword id="KW-0597">Phosphoprotein</keyword>
<keyword id="KW-1185">Reference proteome</keyword>
<dbReference type="EMBL" id="CU329671">
    <property type="protein sequence ID" value="CAA20109.1"/>
    <property type="molecule type" value="Genomic_DNA"/>
</dbReference>
<dbReference type="PIR" id="T39853">
    <property type="entry name" value="T39853"/>
</dbReference>
<dbReference type="RefSeq" id="NP_595807.1">
    <property type="nucleotide sequence ID" value="NM_001021710.2"/>
</dbReference>
<dbReference type="SMR" id="O74338"/>
<dbReference type="BioGRID" id="276909">
    <property type="interactions" value="51"/>
</dbReference>
<dbReference type="DIP" id="DIP-38843N"/>
<dbReference type="FunCoup" id="O74338">
    <property type="interactions" value="5"/>
</dbReference>
<dbReference type="IntAct" id="O74338">
    <property type="interactions" value="6"/>
</dbReference>
<dbReference type="STRING" id="284812.O74338"/>
<dbReference type="iPTMnet" id="O74338"/>
<dbReference type="PaxDb" id="4896-SPBC1A4.05.1"/>
<dbReference type="EnsemblFungi" id="SPBC1A4.05.1">
    <property type="protein sequence ID" value="SPBC1A4.05.1:pep"/>
    <property type="gene ID" value="SPBC1A4.05"/>
</dbReference>
<dbReference type="PomBase" id="SPBC1A4.05">
    <property type="gene designation" value="blt1"/>
</dbReference>
<dbReference type="VEuPathDB" id="FungiDB:SPBC1A4.05"/>
<dbReference type="HOGENOM" id="CLU_393873_0_0_1"/>
<dbReference type="InParanoid" id="O74338"/>
<dbReference type="OMA" id="FPSQEKW"/>
<dbReference type="PRO" id="PR:O74338"/>
<dbReference type="Proteomes" id="UP000002485">
    <property type="component" value="Chromosome II"/>
</dbReference>
<dbReference type="GO" id="GO:0071341">
    <property type="term" value="C:medial cortical node"/>
    <property type="evidence" value="ECO:0000314"/>
    <property type="project" value="PomBase"/>
</dbReference>
<dbReference type="GO" id="GO:0110085">
    <property type="term" value="C:mitotic actomyosin contractile ring"/>
    <property type="evidence" value="ECO:0000314"/>
    <property type="project" value="PomBase"/>
</dbReference>
<dbReference type="GO" id="GO:0120105">
    <property type="term" value="C:mitotic actomyosin contractile ring, intermediate layer"/>
    <property type="evidence" value="ECO:0000314"/>
    <property type="project" value="PomBase"/>
</dbReference>
<dbReference type="GO" id="GO:0106006">
    <property type="term" value="F:cytoskeletal protein-membrane anchor activity"/>
    <property type="evidence" value="ECO:0000315"/>
    <property type="project" value="PomBase"/>
</dbReference>
<dbReference type="GO" id="GO:0000281">
    <property type="term" value="P:mitotic cytokinesis"/>
    <property type="evidence" value="ECO:0000315"/>
    <property type="project" value="PomBase"/>
</dbReference>
<protein>
    <recommendedName>
        <fullName>Mitosis inducer protein blt1</fullName>
    </recommendedName>
</protein>
<gene>
    <name type="primary">blt1</name>
    <name type="ORF">SPBC1A4.05</name>
</gene>
<comment type="function">
    <text evidence="5">At the onset of mitosis, forms a medial ring structure before the arrangement of the medial actin ring. Essential for the central positioning of the division septum before the cell divides.</text>
</comment>
<comment type="subunit">
    <text evidence="3 5">Interacts with cdr2, mid1 and sad1.</text>
</comment>
<comment type="interaction">
    <interactant intactId="EBI-1542378">
        <id>O74338</id>
    </interactant>
    <interactant intactId="EBI-1148185">
        <id>Q09822</id>
        <label>cdc15</label>
    </interactant>
    <organismsDiffer>false</organismsDiffer>
    <experiments>2</experiments>
</comment>
<comment type="subcellular location">
    <subcellularLocation>
        <location evidence="3 5">Cytoplasm</location>
        <location evidence="3 5">Cytoskeleton</location>
    </subcellularLocation>
</comment>
<feature type="chain" id="PRO_0000116767" description="Mitosis inducer protein blt1">
    <location>
        <begin position="1"/>
        <end position="700"/>
    </location>
</feature>
<feature type="region of interest" description="Disordered" evidence="2">
    <location>
        <begin position="1"/>
        <end position="53"/>
    </location>
</feature>
<feature type="region of interest" description="Disordered" evidence="2">
    <location>
        <begin position="266"/>
        <end position="293"/>
    </location>
</feature>
<feature type="region of interest" description="Disordered" evidence="2">
    <location>
        <begin position="634"/>
        <end position="659"/>
    </location>
</feature>
<feature type="region of interest" description="Disordered" evidence="2">
    <location>
        <begin position="671"/>
        <end position="700"/>
    </location>
</feature>
<feature type="coiled-coil region" evidence="1">
    <location>
        <begin position="496"/>
        <end position="575"/>
    </location>
</feature>
<feature type="compositionally biased region" description="Polar residues" evidence="2">
    <location>
        <begin position="1"/>
        <end position="11"/>
    </location>
</feature>
<feature type="compositionally biased region" description="Polar residues" evidence="2">
    <location>
        <begin position="43"/>
        <end position="53"/>
    </location>
</feature>
<feature type="compositionally biased region" description="Low complexity" evidence="2">
    <location>
        <begin position="273"/>
        <end position="284"/>
    </location>
</feature>
<feature type="modified residue" description="Phosphoserine" evidence="4">
    <location>
        <position position="636"/>
    </location>
</feature>
<name>BLT1_SCHPO</name>
<evidence type="ECO:0000255" key="1"/>
<evidence type="ECO:0000256" key="2">
    <source>
        <dbReference type="SAM" id="MobiDB-lite"/>
    </source>
</evidence>
<evidence type="ECO:0000269" key="3">
    <source>
    </source>
</evidence>
<evidence type="ECO:0000269" key="4">
    <source>
    </source>
</evidence>
<evidence type="ECO:0000269" key="5">
    <source>
    </source>
</evidence>
<reference key="1">
    <citation type="journal article" date="2002" name="Nature">
        <title>The genome sequence of Schizosaccharomyces pombe.</title>
        <authorList>
            <person name="Wood V."/>
            <person name="Gwilliam R."/>
            <person name="Rajandream M.A."/>
            <person name="Lyne M.H."/>
            <person name="Lyne R."/>
            <person name="Stewart A."/>
            <person name="Sgouros J.G."/>
            <person name="Peat N."/>
            <person name="Hayles J."/>
            <person name="Baker S.G."/>
            <person name="Basham D."/>
            <person name="Bowman S."/>
            <person name="Brooks K."/>
            <person name="Brown D."/>
            <person name="Brown S."/>
            <person name="Chillingworth T."/>
            <person name="Churcher C.M."/>
            <person name="Collins M."/>
            <person name="Connor R."/>
            <person name="Cronin A."/>
            <person name="Davis P."/>
            <person name="Feltwell T."/>
            <person name="Fraser A."/>
            <person name="Gentles S."/>
            <person name="Goble A."/>
            <person name="Hamlin N."/>
            <person name="Harris D.E."/>
            <person name="Hidalgo J."/>
            <person name="Hodgson G."/>
            <person name="Holroyd S."/>
            <person name="Hornsby T."/>
            <person name="Howarth S."/>
            <person name="Huckle E.J."/>
            <person name="Hunt S."/>
            <person name="Jagels K."/>
            <person name="James K.D."/>
            <person name="Jones L."/>
            <person name="Jones M."/>
            <person name="Leather S."/>
            <person name="McDonald S."/>
            <person name="McLean J."/>
            <person name="Mooney P."/>
            <person name="Moule S."/>
            <person name="Mungall K.L."/>
            <person name="Murphy L.D."/>
            <person name="Niblett D."/>
            <person name="Odell C."/>
            <person name="Oliver K."/>
            <person name="O'Neil S."/>
            <person name="Pearson D."/>
            <person name="Quail M.A."/>
            <person name="Rabbinowitsch E."/>
            <person name="Rutherford K.M."/>
            <person name="Rutter S."/>
            <person name="Saunders D."/>
            <person name="Seeger K."/>
            <person name="Sharp S."/>
            <person name="Skelton J."/>
            <person name="Simmonds M.N."/>
            <person name="Squares R."/>
            <person name="Squares S."/>
            <person name="Stevens K."/>
            <person name="Taylor K."/>
            <person name="Taylor R.G."/>
            <person name="Tivey A."/>
            <person name="Walsh S.V."/>
            <person name="Warren T."/>
            <person name="Whitehead S."/>
            <person name="Woodward J.R."/>
            <person name="Volckaert G."/>
            <person name="Aert R."/>
            <person name="Robben J."/>
            <person name="Grymonprez B."/>
            <person name="Weltjens I."/>
            <person name="Vanstreels E."/>
            <person name="Rieger M."/>
            <person name="Schaefer M."/>
            <person name="Mueller-Auer S."/>
            <person name="Gabel C."/>
            <person name="Fuchs M."/>
            <person name="Duesterhoeft A."/>
            <person name="Fritzc C."/>
            <person name="Holzer E."/>
            <person name="Moestl D."/>
            <person name="Hilbert H."/>
            <person name="Borzym K."/>
            <person name="Langer I."/>
            <person name="Beck A."/>
            <person name="Lehrach H."/>
            <person name="Reinhardt R."/>
            <person name="Pohl T.M."/>
            <person name="Eger P."/>
            <person name="Zimmermann W."/>
            <person name="Wedler H."/>
            <person name="Wambutt R."/>
            <person name="Purnelle B."/>
            <person name="Goffeau A."/>
            <person name="Cadieu E."/>
            <person name="Dreano S."/>
            <person name="Gloux S."/>
            <person name="Lelaure V."/>
            <person name="Mottier S."/>
            <person name="Galibert F."/>
            <person name="Aves S.J."/>
            <person name="Xiang Z."/>
            <person name="Hunt C."/>
            <person name="Moore K."/>
            <person name="Hurst S.M."/>
            <person name="Lucas M."/>
            <person name="Rochet M."/>
            <person name="Gaillardin C."/>
            <person name="Tallada V.A."/>
            <person name="Garzon A."/>
            <person name="Thode G."/>
            <person name="Daga R.R."/>
            <person name="Cruzado L."/>
            <person name="Jimenez J."/>
            <person name="Sanchez M."/>
            <person name="del Rey F."/>
            <person name="Benito J."/>
            <person name="Dominguez A."/>
            <person name="Revuelta J.L."/>
            <person name="Moreno S."/>
            <person name="Armstrong J."/>
            <person name="Forsburg S.L."/>
            <person name="Cerutti L."/>
            <person name="Lowe T."/>
            <person name="McCombie W.R."/>
            <person name="Paulsen I."/>
            <person name="Potashkin J."/>
            <person name="Shpakovski G.V."/>
            <person name="Ussery D."/>
            <person name="Barrell B.G."/>
            <person name="Nurse P."/>
        </authorList>
    </citation>
    <scope>NUCLEOTIDE SEQUENCE [LARGE SCALE GENOMIC DNA]</scope>
    <source>
        <strain>972 / ATCC 24843</strain>
    </source>
</reference>
<reference key="2">
    <citation type="journal article" date="2004" name="Mol. Genet. Genomics">
        <title>Two-hybrid search for proteins that interact with Sad1 and Kms1, two membrane-bound components of the spindle pole body in fission yeast.</title>
        <authorList>
            <person name="Miki F."/>
            <person name="Kurabayashi A."/>
            <person name="Tange Y."/>
            <person name="Okazaki K."/>
            <person name="Shimanuki M."/>
            <person name="Niwa O."/>
        </authorList>
    </citation>
    <scope>INTERACTION WITH SAD1</scope>
    <scope>SUBCELLULAR LOCATION</scope>
</reference>
<reference key="3">
    <citation type="journal article" date="2008" name="J. Proteome Res.">
        <title>Phosphoproteome analysis of fission yeast.</title>
        <authorList>
            <person name="Wilson-Grady J.T."/>
            <person name="Villen J."/>
            <person name="Gygi S.P."/>
        </authorList>
    </citation>
    <scope>PHOSPHORYLATION [LARGE SCALE ANALYSIS] AT SER-636</scope>
    <scope>IDENTIFICATION BY MASS SPECTROMETRY</scope>
</reference>
<reference key="4">
    <citation type="journal article" date="2009" name="Nature">
        <title>A spatial gradient coordinates cell size and mitotic entry in fission yeast.</title>
        <authorList>
            <person name="Moseley J.B."/>
            <person name="Mayeux A."/>
            <person name="Paoletti A."/>
            <person name="Nurse P."/>
        </authorList>
    </citation>
    <scope>SUBCELLULAR LOCATION</scope>
    <scope>FUNCTION</scope>
    <scope>INTERACTION WITH CDR2 AND MID1</scope>
</reference>
<sequence>MSKSAFTSKSQLKGIDGSFNDPFRQPSMNLPTPPHDDGLPSIPRSTALPNLSNRLSPYSHRNYLPIPEADSRNLEVLNSISLTTGSVVNQINKLYQRSCDNANYLQDLRSLILQTPTAEANATQVTESLNQIQKILQEASSKDREQIVQVIKELNKGNSLEVRRELGNCLAHLKKGTLNIDNALQASLQKYWKELQYFNVSKDKLLSLEESIKLLSARLEETDTPSSTHWIEINAGFKEVGDELSENFQRKQEILSGLQNNVILRTNNRKPVGSDGSNSNFNGGEEQMDSKDQEEIQDYLNSLLSVHEKDGVLLQKFHNSYVQYQKLAVALSKYENFDADKLFQQMNLAKQSNETLLQTLTEQTDQLLSFKETMDSFKFILGPSMENQALQQGILAEQQDLVAQLRDIVLRSETLAENPSNMPGSCLPGASSNTADEFTEQLNLLKNEVARLSAICPSPNSGINASVLTNADNLEKENLLLVNNNAFKVDDRSVSSVALDDHNRQLQMNVEELEGKKADLTSKINRLDKDFVKLNTTYSLLTDQVKTKQLALQEIESRVIRLEERLNMLQKLSMQPAISSSSEFVPIESHPSSSAVVPIEEPKNSIIEKKRVPHNAARNSVNLEVTLPNSKKRFSSFSGSSSKLPVRPSTALTDKRKPSWSRRLAAAIGFSSGSPEKKHVITSSDAGHQRSKSRSFSSKM</sequence>
<proteinExistence type="evidence at protein level"/>